<dbReference type="EC" id="7.4.2.11" evidence="1 2 3 4"/>
<dbReference type="EMBL" id="D15061">
    <property type="protein sequence ID" value="BAA03659.1"/>
    <property type="status" value="ALT_FRAME"/>
    <property type="molecule type" value="Genomic_DNA"/>
</dbReference>
<dbReference type="EMBL" id="U70214">
    <property type="protein sequence ID" value="AAB08627.1"/>
    <property type="molecule type" value="Genomic_DNA"/>
</dbReference>
<dbReference type="EMBL" id="U00096">
    <property type="protein sequence ID" value="AAC73310.1"/>
    <property type="molecule type" value="Genomic_DNA"/>
</dbReference>
<dbReference type="EMBL" id="AP009048">
    <property type="protein sequence ID" value="BAA77876.2"/>
    <property type="molecule type" value="Genomic_DNA"/>
</dbReference>
<dbReference type="EMBL" id="L08626">
    <property type="protein sequence ID" value="AAC36869.1"/>
    <property type="status" value="ALT_FRAME"/>
    <property type="molecule type" value="Unassigned_DNA"/>
</dbReference>
<dbReference type="PIR" id="G64744">
    <property type="entry name" value="G64744"/>
</dbReference>
<dbReference type="RefSeq" id="NP_414741.1">
    <property type="nucleotide sequence ID" value="NC_000913.3"/>
</dbReference>
<dbReference type="RefSeq" id="WP_000594006.1">
    <property type="nucleotide sequence ID" value="NZ_SSZK01000004.1"/>
</dbReference>
<dbReference type="PDB" id="3DHW">
    <property type="method" value="X-ray"/>
    <property type="resolution" value="3.70 A"/>
    <property type="chains" value="C/D/G/H=1-343"/>
</dbReference>
<dbReference type="PDB" id="3DHX">
    <property type="method" value="X-ray"/>
    <property type="resolution" value="2.10 A"/>
    <property type="chains" value="A/B=246-343"/>
</dbReference>
<dbReference type="PDB" id="3TUI">
    <property type="method" value="X-ray"/>
    <property type="resolution" value="2.90 A"/>
    <property type="chains" value="C/D/G/H=1-343"/>
</dbReference>
<dbReference type="PDB" id="3TUJ">
    <property type="method" value="X-ray"/>
    <property type="resolution" value="4.00 A"/>
    <property type="chains" value="C/D=1-343"/>
</dbReference>
<dbReference type="PDB" id="3TUZ">
    <property type="method" value="X-ray"/>
    <property type="resolution" value="3.40 A"/>
    <property type="chains" value="C/D/G/H=1-343"/>
</dbReference>
<dbReference type="PDB" id="6CVL">
    <property type="method" value="X-ray"/>
    <property type="resolution" value="2.95 A"/>
    <property type="chains" value="C/D=1-343"/>
</dbReference>
<dbReference type="PDBsum" id="3DHW"/>
<dbReference type="PDBsum" id="3DHX"/>
<dbReference type="PDBsum" id="3TUI"/>
<dbReference type="PDBsum" id="3TUJ"/>
<dbReference type="PDBsum" id="3TUZ"/>
<dbReference type="PDBsum" id="6CVL"/>
<dbReference type="SMR" id="P30750"/>
<dbReference type="BioGRID" id="4259755">
    <property type="interactions" value="40"/>
</dbReference>
<dbReference type="BioGRID" id="849296">
    <property type="interactions" value="39"/>
</dbReference>
<dbReference type="ComplexPortal" id="CPX-2114">
    <property type="entry name" value="Methionine ABC transporter complex"/>
</dbReference>
<dbReference type="DIP" id="DIP-9027N"/>
<dbReference type="FunCoup" id="P30750">
    <property type="interactions" value="373"/>
</dbReference>
<dbReference type="IntAct" id="P30750">
    <property type="interactions" value="57"/>
</dbReference>
<dbReference type="STRING" id="511145.b0199"/>
<dbReference type="TCDB" id="3.A.1.24.1">
    <property type="family name" value="the atp-binding cassette (abc) superfamily"/>
</dbReference>
<dbReference type="jPOST" id="P30750"/>
<dbReference type="PaxDb" id="511145-b0199"/>
<dbReference type="EnsemblBacteria" id="AAC73310">
    <property type="protein sequence ID" value="AAC73310"/>
    <property type="gene ID" value="b0199"/>
</dbReference>
<dbReference type="GeneID" id="944896"/>
<dbReference type="KEGG" id="ecj:JW0195"/>
<dbReference type="KEGG" id="eco:b0199"/>
<dbReference type="KEGG" id="ecoc:C3026_00925"/>
<dbReference type="PATRIC" id="fig|1411691.4.peg.2079"/>
<dbReference type="EchoBASE" id="EB1578"/>
<dbReference type="eggNOG" id="COG1135">
    <property type="taxonomic scope" value="Bacteria"/>
</dbReference>
<dbReference type="HOGENOM" id="CLU_000604_1_3_6"/>
<dbReference type="InParanoid" id="P30750"/>
<dbReference type="OMA" id="FANPKHA"/>
<dbReference type="OrthoDB" id="9802264at2"/>
<dbReference type="PhylomeDB" id="P30750"/>
<dbReference type="BioCyc" id="EcoCyc:ABC-MONOMER"/>
<dbReference type="BioCyc" id="MetaCyc:ABC-MONOMER"/>
<dbReference type="BRENDA" id="7.4.2.11">
    <property type="organism ID" value="2026"/>
</dbReference>
<dbReference type="EvolutionaryTrace" id="P30750"/>
<dbReference type="PRO" id="PR:P30750"/>
<dbReference type="Proteomes" id="UP000000625">
    <property type="component" value="Chromosome"/>
</dbReference>
<dbReference type="GO" id="GO:0055052">
    <property type="term" value="C:ATP-binding cassette (ABC) transporter complex, substrate-binding subunit-containing"/>
    <property type="evidence" value="ECO:0000314"/>
    <property type="project" value="EcoCyc"/>
</dbReference>
<dbReference type="GO" id="GO:0009276">
    <property type="term" value="C:Gram-negative-bacterium-type cell wall"/>
    <property type="evidence" value="ECO:0007669"/>
    <property type="project" value="InterPro"/>
</dbReference>
<dbReference type="GO" id="GO:0016020">
    <property type="term" value="C:membrane"/>
    <property type="evidence" value="ECO:0000314"/>
    <property type="project" value="ComplexPortal"/>
</dbReference>
<dbReference type="GO" id="GO:1990197">
    <property type="term" value="C:methionine-importing ABC transporter complex"/>
    <property type="evidence" value="ECO:0000353"/>
    <property type="project" value="ComplexPortal"/>
</dbReference>
<dbReference type="GO" id="GO:0033232">
    <property type="term" value="F:ABC-type D-methionine transporter activity"/>
    <property type="evidence" value="ECO:0000314"/>
    <property type="project" value="EcoliWiki"/>
</dbReference>
<dbReference type="GO" id="GO:0005524">
    <property type="term" value="F:ATP binding"/>
    <property type="evidence" value="ECO:0000314"/>
    <property type="project" value="EcoliWiki"/>
</dbReference>
<dbReference type="GO" id="GO:0016887">
    <property type="term" value="F:ATP hydrolysis activity"/>
    <property type="evidence" value="ECO:0000314"/>
    <property type="project" value="EcoliWiki"/>
</dbReference>
<dbReference type="GO" id="GO:0042626">
    <property type="term" value="F:ATPase-coupled transmembrane transporter activity"/>
    <property type="evidence" value="ECO:0000314"/>
    <property type="project" value="EcoCyc"/>
</dbReference>
<dbReference type="GO" id="GO:0015191">
    <property type="term" value="F:L-methionine transmembrane transporter activity"/>
    <property type="evidence" value="ECO:0000314"/>
    <property type="project" value="EcoCyc"/>
</dbReference>
<dbReference type="GO" id="GO:0048473">
    <property type="term" value="P:D-methionine transmembrane transport"/>
    <property type="evidence" value="ECO:0000315"/>
    <property type="project" value="CACAO"/>
</dbReference>
<dbReference type="GO" id="GO:1903692">
    <property type="term" value="P:methionine import across plasma membrane"/>
    <property type="evidence" value="ECO:0000314"/>
    <property type="project" value="ComplexPortal"/>
</dbReference>
<dbReference type="CDD" id="cd03258">
    <property type="entry name" value="ABC_MetN_methionine_transporter"/>
    <property type="match status" value="1"/>
</dbReference>
<dbReference type="FunFam" id="3.30.70.260:FF:000014">
    <property type="entry name" value="Methionine import ATP-binding protein MetN"/>
    <property type="match status" value="1"/>
</dbReference>
<dbReference type="FunFam" id="3.40.50.300:FF:000233">
    <property type="entry name" value="Methionine import ATP-binding protein MetN"/>
    <property type="match status" value="1"/>
</dbReference>
<dbReference type="Gene3D" id="3.30.70.260">
    <property type="match status" value="1"/>
</dbReference>
<dbReference type="Gene3D" id="3.40.50.300">
    <property type="entry name" value="P-loop containing nucleotide triphosphate hydrolases"/>
    <property type="match status" value="1"/>
</dbReference>
<dbReference type="InterPro" id="IPR003593">
    <property type="entry name" value="AAA+_ATPase"/>
</dbReference>
<dbReference type="InterPro" id="IPR012692">
    <property type="entry name" value="ABC_MetN_proteobac"/>
</dbReference>
<dbReference type="InterPro" id="IPR003439">
    <property type="entry name" value="ABC_transporter-like_ATP-bd"/>
</dbReference>
<dbReference type="InterPro" id="IPR017871">
    <property type="entry name" value="ABC_transporter-like_CS"/>
</dbReference>
<dbReference type="InterPro" id="IPR045865">
    <property type="entry name" value="ACT-like_dom_sf"/>
</dbReference>
<dbReference type="InterPro" id="IPR041701">
    <property type="entry name" value="MetN_ABC"/>
</dbReference>
<dbReference type="InterPro" id="IPR050086">
    <property type="entry name" value="MetN_ABC_transporter-like"/>
</dbReference>
<dbReference type="InterPro" id="IPR018449">
    <property type="entry name" value="NIL_domain"/>
</dbReference>
<dbReference type="InterPro" id="IPR027417">
    <property type="entry name" value="P-loop_NTPase"/>
</dbReference>
<dbReference type="NCBIfam" id="TIGR02314">
    <property type="entry name" value="ABC_MetN"/>
    <property type="match status" value="1"/>
</dbReference>
<dbReference type="PANTHER" id="PTHR43166">
    <property type="entry name" value="AMINO ACID IMPORT ATP-BINDING PROTEIN"/>
    <property type="match status" value="1"/>
</dbReference>
<dbReference type="PANTHER" id="PTHR43166:SF30">
    <property type="entry name" value="METHIONINE IMPORT ATP-BINDING PROTEIN METN"/>
    <property type="match status" value="1"/>
</dbReference>
<dbReference type="Pfam" id="PF00005">
    <property type="entry name" value="ABC_tran"/>
    <property type="match status" value="1"/>
</dbReference>
<dbReference type="Pfam" id="PF09383">
    <property type="entry name" value="NIL"/>
    <property type="match status" value="1"/>
</dbReference>
<dbReference type="SMART" id="SM00382">
    <property type="entry name" value="AAA"/>
    <property type="match status" value="1"/>
</dbReference>
<dbReference type="SMART" id="SM00930">
    <property type="entry name" value="NIL"/>
    <property type="match status" value="1"/>
</dbReference>
<dbReference type="SUPFAM" id="SSF55021">
    <property type="entry name" value="ACT-like"/>
    <property type="match status" value="1"/>
</dbReference>
<dbReference type="SUPFAM" id="SSF52540">
    <property type="entry name" value="P-loop containing nucleoside triphosphate hydrolases"/>
    <property type="match status" value="1"/>
</dbReference>
<dbReference type="PROSITE" id="PS00211">
    <property type="entry name" value="ABC_TRANSPORTER_1"/>
    <property type="match status" value="1"/>
</dbReference>
<dbReference type="PROSITE" id="PS50893">
    <property type="entry name" value="ABC_TRANSPORTER_2"/>
    <property type="match status" value="1"/>
</dbReference>
<dbReference type="PROSITE" id="PS51264">
    <property type="entry name" value="METN"/>
    <property type="match status" value="1"/>
</dbReference>
<organism>
    <name type="scientific">Escherichia coli (strain K12)</name>
    <dbReference type="NCBI Taxonomy" id="83333"/>
    <lineage>
        <taxon>Bacteria</taxon>
        <taxon>Pseudomonadati</taxon>
        <taxon>Pseudomonadota</taxon>
        <taxon>Gammaproteobacteria</taxon>
        <taxon>Enterobacterales</taxon>
        <taxon>Enterobacteriaceae</taxon>
        <taxon>Escherichia</taxon>
    </lineage>
</organism>
<accession>P30750</accession>
<accession>P77517</accession>
<accession>Q47615</accession>
<sequence>MIKLSNITKVFHQGTRTIQALNNVSLHVPAGQIYGVIGASGAGKSTLIRCVNLLERPTEGSVLVDGQELTTLSESELTKARRQIGMIFQHFNLLSSRTVFGNVALPLELDNTPKDEVKRRVTELLSLVGLGDKHDSYPSNLSGGQKQRVAIARALASNPKVLLCDEATSALDPATTRSILELLKDINRRLGLTILLITHEMDVVKRICDCVAVISNGELIEQDTVSEVFSHPKTPLAQKFIQSTLHLDIPEDYQERLQAEPFTDCVPMLRLEFTGQSVDAPLLSETARRFNVNNNIISAQMDYAGGVKFGIMLTEMHGTQQDTQAAIAWLQEHHVKVEVLGYV</sequence>
<proteinExistence type="evidence at protein level"/>
<reference key="1">
    <citation type="submission" date="1993-04" db="EMBL/GenBank/DDBJ databases">
        <title>Nucleotide sequence of 5'flanking region of the ribosomal RNA gene (rrnH) in E. coli.</title>
        <authorList>
            <person name="Miyamoto K."/>
            <person name="Inokuchi H."/>
        </authorList>
    </citation>
    <scope>NUCLEOTIDE SEQUENCE [GENOMIC DNA]</scope>
    <source>
        <strain>K12</strain>
    </source>
</reference>
<reference key="2">
    <citation type="submission" date="1996-02" db="EMBL/GenBank/DDBJ databases">
        <title>Systematic sequencing of the Escherichia coli genome: analysis of the 4.0 - 6.0 min (189,987 - 281,416bp) region.</title>
        <authorList>
            <person name="Takemoto K."/>
            <person name="Mori H."/>
            <person name="Murayama N."/>
            <person name="Kataoka K."/>
            <person name="Yano M."/>
            <person name="Itoh T."/>
            <person name="Yamamoto Y."/>
            <person name="Inokuchi H."/>
            <person name="Miki T."/>
            <person name="Hatada E."/>
            <person name="Fukuda R."/>
            <person name="Ichihara S."/>
            <person name="Mizuno T."/>
            <person name="Makino K."/>
            <person name="Nakata A."/>
            <person name="Yura T."/>
            <person name="Sampei G."/>
            <person name="Mizobuchi K."/>
        </authorList>
    </citation>
    <scope>NUCLEOTIDE SEQUENCE [LARGE SCALE GENOMIC DNA]</scope>
    <source>
        <strain>K12 / W3110 / ATCC 27325 / DSM 5911</strain>
    </source>
</reference>
<reference key="3">
    <citation type="submission" date="1997-01" db="EMBL/GenBank/DDBJ databases">
        <title>Sequence of minutes 4-25 of Escherichia coli.</title>
        <authorList>
            <person name="Chung E."/>
            <person name="Allen E."/>
            <person name="Araujo R."/>
            <person name="Aparicio A.M."/>
            <person name="Davis K."/>
            <person name="Duncan M."/>
            <person name="Federspiel N."/>
            <person name="Hyman R."/>
            <person name="Kalman S."/>
            <person name="Komp C."/>
            <person name="Kurdi O."/>
            <person name="Lew H."/>
            <person name="Lin D."/>
            <person name="Namath A."/>
            <person name="Oefner P."/>
            <person name="Roberts D."/>
            <person name="Schramm S."/>
            <person name="Davis R.W."/>
        </authorList>
    </citation>
    <scope>NUCLEOTIDE SEQUENCE [LARGE SCALE GENOMIC DNA]</scope>
    <source>
        <strain>K12 / MG1655 / ATCC 47076</strain>
    </source>
</reference>
<reference key="4">
    <citation type="journal article" date="1997" name="Science">
        <title>The complete genome sequence of Escherichia coli K-12.</title>
        <authorList>
            <person name="Blattner F.R."/>
            <person name="Plunkett G. III"/>
            <person name="Bloch C.A."/>
            <person name="Perna N.T."/>
            <person name="Burland V."/>
            <person name="Riley M."/>
            <person name="Collado-Vides J."/>
            <person name="Glasner J.D."/>
            <person name="Rode C.K."/>
            <person name="Mayhew G.F."/>
            <person name="Gregor J."/>
            <person name="Davis N.W."/>
            <person name="Kirkpatrick H.A."/>
            <person name="Goeden M.A."/>
            <person name="Rose D.J."/>
            <person name="Mau B."/>
            <person name="Shao Y."/>
        </authorList>
    </citation>
    <scope>NUCLEOTIDE SEQUENCE [LARGE SCALE GENOMIC DNA]</scope>
    <source>
        <strain>K12 / MG1655 / ATCC 47076</strain>
    </source>
</reference>
<reference key="5">
    <citation type="journal article" date="2006" name="Mol. Syst. Biol.">
        <title>Highly accurate genome sequences of Escherichia coli K-12 strains MG1655 and W3110.</title>
        <authorList>
            <person name="Hayashi K."/>
            <person name="Morooka N."/>
            <person name="Yamamoto Y."/>
            <person name="Fujita K."/>
            <person name="Isono K."/>
            <person name="Choi S."/>
            <person name="Ohtsubo E."/>
            <person name="Baba T."/>
            <person name="Wanner B.L."/>
            <person name="Mori H."/>
            <person name="Horiuchi T."/>
        </authorList>
    </citation>
    <scope>NUCLEOTIDE SEQUENCE [LARGE SCALE GENOMIC DNA]</scope>
    <scope>SEQUENCE REVISION TO 106</scope>
    <source>
        <strain>K12 / W3110 / ATCC 27325 / DSM 5911</strain>
    </source>
</reference>
<reference key="6">
    <citation type="journal article" date="1993" name="Gene">
        <title>Cloning and organization of the abc and mdl genes of Escherichia coli: relationship to eukaryotic multidrug resistance.</title>
        <authorList>
            <person name="Allikmets R."/>
            <person name="Gerrard B.C."/>
            <person name="Court D."/>
            <person name="Dean M.C."/>
        </authorList>
    </citation>
    <scope>NUCLEOTIDE SEQUENCE [GENOMIC DNA] OF 1-231</scope>
    <source>
        <strain>TAP90 / ATCC 47037</strain>
    </source>
</reference>
<reference key="7">
    <citation type="journal article" date="2002" name="J. Bacteriol.">
        <title>The metD D-methionine transporter locus of Escherichia coli is an ABC transporter gene cluster.</title>
        <authorList>
            <person name="Gal J."/>
            <person name="Szvetnik A."/>
            <person name="Schnell R."/>
            <person name="Kalman M."/>
        </authorList>
    </citation>
    <scope>FUNCTION IN METHIONINE TRANSPORT</scope>
    <scope>CATALYTIC ACTIVITY</scope>
    <source>
        <strain>K12 / MG1655 / ATCC 47076</strain>
    </source>
</reference>
<reference key="8">
    <citation type="journal article" date="2002" name="J. Bacteriol.">
        <title>The Escherichia coli metD locus encodes an ABC transporter which includes Abc (MetN), YaeE (MetI), and YaeC (MetQ).</title>
        <authorList>
            <person name="Merlin C."/>
            <person name="Gardiner G."/>
            <person name="Durand S."/>
            <person name="Masters M."/>
        </authorList>
    </citation>
    <scope>FUNCTION</scope>
    <scope>CATALYTIC ACTIVITY</scope>
    <scope>SUBUNIT</scope>
</reference>
<reference key="9">
    <citation type="journal article" date="2003" name="Arch. Microbiol.">
        <title>A transporter of Escherichia coli specific for L- and D-methionine is the prototype for a new family within the ABC superfamily.</title>
        <authorList>
            <person name="Zhang Z."/>
            <person name="Feige J.N."/>
            <person name="Chang A.B."/>
            <person name="Anderson I.J."/>
            <person name="Brodianski V.M."/>
            <person name="Vitreschak A.G."/>
            <person name="Gelfand M.S."/>
            <person name="Saier M.H. Jr."/>
        </authorList>
    </citation>
    <scope>FUNCTION IN METHIONINE AND FORMYL-L-METHIONINE TRANSPORT</scope>
    <scope>CATALYTIC ACTIVITY</scope>
    <scope>INDUCTION</scope>
    <source>
        <strain>K12</strain>
    </source>
</reference>
<reference key="10">
    <citation type="journal article" date="2015" name="J. Biol. Chem.">
        <title>The allosteric regulatory mechanism of the Escherichia coli MetNI methionine ATP binding cassette (ABC) transporter.</title>
        <authorList>
            <person name="Yang J.G."/>
            <person name="Rees D.C."/>
        </authorList>
    </citation>
    <scope>FUNCTION</scope>
    <scope>ATPASE ACTIVITY</scope>
    <scope>ACTIVITY REGULATION</scope>
    <scope>BIOPHYSICOCHEMICAL PROPERTIES</scope>
</reference>
<reference evidence="12 13" key="11">
    <citation type="journal article" date="2008" name="Science">
        <title>The high-affinity E. coli methionine ABC transporter: structure and allosteric regulation.</title>
        <authorList>
            <person name="Kadaba N.S."/>
            <person name="Kaiser J.T."/>
            <person name="Johnson E."/>
            <person name="Lee A."/>
            <person name="Rees D.C."/>
        </authorList>
    </citation>
    <scope>X-RAY CRYSTALLOGRAPHY (2.10 ANGSTROMS) OF 246-343 IN COMPLEX WITH METI</scope>
    <scope>FUNCTION</scope>
    <scope>ATPASE ACTIVITY</scope>
    <scope>ACTIVITY REGULATION</scope>
    <scope>SUBUNIT</scope>
    <scope>DOMAIN</scope>
    <scope>MUTAGENESIS OF GLU-166</scope>
</reference>
<reference evidence="14 15 16" key="12">
    <citation type="journal article" date="2012" name="Protein Sci.">
        <title>Inward facing conformations of the MetNI methionine ABC transporter: Implications for the mechanism of transinhibition.</title>
        <authorList>
            <person name="Johnson E."/>
            <person name="Nguyen P.T."/>
            <person name="Yeates T.O."/>
            <person name="Rees D.C."/>
        </authorList>
    </citation>
    <scope>X-RAY CRYSTALLOGRAPHY (2.90 ANGSTROMS) IN COMPLEXES WITH METI; ADP AND SELENOMETHIONINE</scope>
    <scope>ACTIVITY REGULATION</scope>
</reference>
<reference evidence="17" key="13">
    <citation type="journal article" date="2018" name="Proc. Natl. Acad. Sci. U.S.A.">
        <title>Noncanonical role for the binding protein in substrate uptake by the MetNI methionine ATP Binding Cassette (ABC) transporter.</title>
        <authorList>
            <person name="Nguyen P.T."/>
            <person name="Lai J.Y."/>
            <person name="Lee A.T."/>
            <person name="Kaiser J.T."/>
            <person name="Rees D.C."/>
        </authorList>
    </citation>
    <scope>X-RAY CRYSTALLOGRAPHY (2.95 ANGSTROMS) OF MUTANT GLN-166/ALA-295 IN COMPLEX WITH METI AND METQ</scope>
    <scope>FUNCTION</scope>
    <scope>ACTIVITY REGULATION</scope>
    <scope>SUBUNIT</scope>
    <scope>MUTAGENESIS OF ASN-295</scope>
    <source>
        <strain>K12</strain>
    </source>
</reference>
<gene>
    <name evidence="1 9" type="primary">metN</name>
    <name type="synonym">abc</name>
    <name type="ordered locus">b0199</name>
    <name type="ordered locus">JW0195</name>
</gene>
<protein>
    <recommendedName>
        <fullName evidence="1">Methionine import ATP-binding protein MetN</fullName>
        <ecNumber evidence="1 2 3 4">7.4.2.11</ecNumber>
    </recommendedName>
</protein>
<feature type="chain" id="PRO_0000092503" description="Methionine import ATP-binding protein MetN">
    <location>
        <begin position="1"/>
        <end position="343"/>
    </location>
</feature>
<feature type="domain" description="ABC transporter" evidence="1">
    <location>
        <begin position="2"/>
        <end position="241"/>
    </location>
</feature>
<feature type="region of interest" description="C2 domain" evidence="11">
    <location>
        <begin position="265"/>
        <end position="343"/>
    </location>
</feature>
<feature type="binding site" evidence="6">
    <location>
        <begin position="40"/>
        <end position="46"/>
    </location>
    <ligand>
        <name>ATP</name>
        <dbReference type="ChEBI" id="CHEBI:30616"/>
    </ligand>
</feature>
<feature type="binding site" evidence="6">
    <location>
        <begin position="278"/>
        <end position="283"/>
    </location>
    <ligand>
        <name>L-methionine</name>
        <dbReference type="ChEBI" id="CHEBI:57844"/>
        <note>allosteric inhibitor</note>
    </ligand>
</feature>
<feature type="binding site" evidence="6">
    <location>
        <begin position="295"/>
        <end position="296"/>
    </location>
    <ligand>
        <name>L-methionine</name>
        <dbReference type="ChEBI" id="CHEBI:57844"/>
        <note>allosteric inhibitor</note>
    </ligand>
</feature>
<feature type="mutagenesis site" description="Exhibits little ATPase activity." evidence="5">
    <original>E</original>
    <variation>Q</variation>
    <location>
        <position position="166"/>
    </location>
</feature>
<feature type="mutagenesis site" description="Reduces the binding of L-methionine to undetectable levels." evidence="8">
    <original>N</original>
    <variation>A</variation>
    <location>
        <position position="295"/>
    </location>
</feature>
<feature type="sequence conflict" description="In Ref. 6; AAC36869." evidence="10" ref="6">
    <original>D</original>
    <variation>V</variation>
    <location>
        <position position="165"/>
    </location>
</feature>
<feature type="strand" evidence="19">
    <location>
        <begin position="2"/>
        <end position="12"/>
    </location>
</feature>
<feature type="strand" evidence="19">
    <location>
        <begin position="14"/>
        <end position="28"/>
    </location>
</feature>
<feature type="strand" evidence="19">
    <location>
        <begin position="33"/>
        <end position="37"/>
    </location>
</feature>
<feature type="helix" evidence="19">
    <location>
        <begin position="44"/>
        <end position="51"/>
    </location>
</feature>
<feature type="strand" evidence="19">
    <location>
        <begin position="58"/>
        <end position="64"/>
    </location>
</feature>
<feature type="helix" evidence="19">
    <location>
        <begin position="74"/>
        <end position="81"/>
    </location>
</feature>
<feature type="strand" evidence="19">
    <location>
        <begin position="84"/>
        <end position="87"/>
    </location>
</feature>
<feature type="helix" evidence="19">
    <location>
        <begin position="99"/>
        <end position="109"/>
    </location>
</feature>
<feature type="helix" evidence="19">
    <location>
        <begin position="114"/>
        <end position="127"/>
    </location>
</feature>
<feature type="helix" evidence="19">
    <location>
        <begin position="131"/>
        <end position="133"/>
    </location>
</feature>
<feature type="turn" evidence="19">
    <location>
        <begin position="138"/>
        <end position="140"/>
    </location>
</feature>
<feature type="helix" evidence="19">
    <location>
        <begin position="143"/>
        <end position="154"/>
    </location>
</feature>
<feature type="turn" evidence="19">
    <location>
        <begin position="155"/>
        <end position="157"/>
    </location>
</feature>
<feature type="strand" evidence="19">
    <location>
        <begin position="160"/>
        <end position="166"/>
    </location>
</feature>
<feature type="turn" evidence="19">
    <location>
        <begin position="167"/>
        <end position="170"/>
    </location>
</feature>
<feature type="helix" evidence="19">
    <location>
        <begin position="173"/>
        <end position="189"/>
    </location>
</feature>
<feature type="strand" evidence="19">
    <location>
        <begin position="193"/>
        <end position="199"/>
    </location>
</feature>
<feature type="helix" evidence="19">
    <location>
        <begin position="201"/>
        <end position="207"/>
    </location>
</feature>
<feature type="strand" evidence="19">
    <location>
        <begin position="209"/>
        <end position="215"/>
    </location>
</feature>
<feature type="strand" evidence="19">
    <location>
        <begin position="218"/>
        <end position="221"/>
    </location>
</feature>
<feature type="helix" evidence="19">
    <location>
        <begin position="225"/>
        <end position="229"/>
    </location>
</feature>
<feature type="helix" evidence="19">
    <location>
        <begin position="235"/>
        <end position="244"/>
    </location>
</feature>
<feature type="helix" evidence="18">
    <location>
        <begin position="251"/>
        <end position="256"/>
    </location>
</feature>
<feature type="strand" evidence="18">
    <location>
        <begin position="258"/>
        <end position="260"/>
    </location>
</feature>
<feature type="strand" evidence="18">
    <location>
        <begin position="265"/>
        <end position="276"/>
    </location>
</feature>
<feature type="strand" evidence="20">
    <location>
        <begin position="278"/>
        <end position="280"/>
    </location>
</feature>
<feature type="helix" evidence="18">
    <location>
        <begin position="282"/>
        <end position="289"/>
    </location>
</feature>
<feature type="strand" evidence="18">
    <location>
        <begin position="293"/>
        <end position="304"/>
    </location>
</feature>
<feature type="strand" evidence="18">
    <location>
        <begin position="307"/>
        <end position="318"/>
    </location>
</feature>
<feature type="helix" evidence="18">
    <location>
        <begin position="320"/>
        <end position="332"/>
    </location>
</feature>
<feature type="strand" evidence="18">
    <location>
        <begin position="336"/>
        <end position="343"/>
    </location>
</feature>
<keyword id="KW-0002">3D-structure</keyword>
<keyword id="KW-0021">Allosteric enzyme</keyword>
<keyword id="KW-0029">Amino-acid transport</keyword>
<keyword id="KW-0067">ATP-binding</keyword>
<keyword id="KW-0997">Cell inner membrane</keyword>
<keyword id="KW-1003">Cell membrane</keyword>
<keyword id="KW-0472">Membrane</keyword>
<keyword id="KW-0547">Nucleotide-binding</keyword>
<keyword id="KW-1185">Reference proteome</keyword>
<keyword id="KW-1278">Translocase</keyword>
<keyword id="KW-0813">Transport</keyword>
<evidence type="ECO:0000255" key="1">
    <source>
        <dbReference type="HAMAP-Rule" id="MF_01719"/>
    </source>
</evidence>
<evidence type="ECO:0000269" key="2">
    <source>
    </source>
</evidence>
<evidence type="ECO:0000269" key="3">
    <source>
    </source>
</evidence>
<evidence type="ECO:0000269" key="4">
    <source>
    </source>
</evidence>
<evidence type="ECO:0000269" key="5">
    <source>
    </source>
</evidence>
<evidence type="ECO:0000269" key="6">
    <source>
    </source>
</evidence>
<evidence type="ECO:0000269" key="7">
    <source>
    </source>
</evidence>
<evidence type="ECO:0000269" key="8">
    <source>
    </source>
</evidence>
<evidence type="ECO:0000303" key="9">
    <source>
    </source>
</evidence>
<evidence type="ECO:0000305" key="10"/>
<evidence type="ECO:0000305" key="11">
    <source>
    </source>
</evidence>
<evidence type="ECO:0007744" key="12">
    <source>
        <dbReference type="PDB" id="3DHW"/>
    </source>
</evidence>
<evidence type="ECO:0007744" key="13">
    <source>
        <dbReference type="PDB" id="3DHX"/>
    </source>
</evidence>
<evidence type="ECO:0007744" key="14">
    <source>
        <dbReference type="PDB" id="3TUI"/>
    </source>
</evidence>
<evidence type="ECO:0007744" key="15">
    <source>
        <dbReference type="PDB" id="3TUJ"/>
    </source>
</evidence>
<evidence type="ECO:0007744" key="16">
    <source>
        <dbReference type="PDB" id="3TUZ"/>
    </source>
</evidence>
<evidence type="ECO:0007744" key="17">
    <source>
        <dbReference type="PDB" id="6CVL"/>
    </source>
</evidence>
<evidence type="ECO:0007829" key="18">
    <source>
        <dbReference type="PDB" id="3DHX"/>
    </source>
</evidence>
<evidence type="ECO:0007829" key="19">
    <source>
        <dbReference type="PDB" id="3TUI"/>
    </source>
</evidence>
<evidence type="ECO:0007829" key="20">
    <source>
        <dbReference type="PDB" id="3TUZ"/>
    </source>
</evidence>
<comment type="function">
    <text evidence="2 3 4 5 7 8">Part of the ABC transporter complex MetNIQ involved in methionine import (PubMed:12169620, PubMed:12218041, PubMed:12819857, PubMed:18621668, PubMed:30352853). Responsible for energy coupling to the transport system (PubMed:18621668, PubMed:25678706). It has also been shown to be involved in formyl-L-methionine transport (PubMed:12819857).</text>
</comment>
<comment type="catalytic activity">
    <reaction evidence="1 4">
        <text>L-methionine(out) + ATP + H2O = L-methionine(in) + ADP + phosphate + H(+)</text>
        <dbReference type="Rhea" id="RHEA:29779"/>
        <dbReference type="ChEBI" id="CHEBI:15377"/>
        <dbReference type="ChEBI" id="CHEBI:15378"/>
        <dbReference type="ChEBI" id="CHEBI:30616"/>
        <dbReference type="ChEBI" id="CHEBI:43474"/>
        <dbReference type="ChEBI" id="CHEBI:57844"/>
        <dbReference type="ChEBI" id="CHEBI:456216"/>
        <dbReference type="EC" id="7.4.2.11"/>
    </reaction>
</comment>
<comment type="catalytic activity">
    <reaction evidence="1 2 3 4">
        <text>D-methionine(out) + ATP + H2O = D-methionine(in) + ADP + phosphate + H(+)</text>
        <dbReference type="Rhea" id="RHEA:29767"/>
        <dbReference type="ChEBI" id="CHEBI:15377"/>
        <dbReference type="ChEBI" id="CHEBI:15378"/>
        <dbReference type="ChEBI" id="CHEBI:30616"/>
        <dbReference type="ChEBI" id="CHEBI:43474"/>
        <dbReference type="ChEBI" id="CHEBI:57932"/>
        <dbReference type="ChEBI" id="CHEBI:456216"/>
        <dbReference type="EC" id="7.4.2.11"/>
    </reaction>
</comment>
<comment type="activity regulation">
    <text evidence="5 6 7 8">ATPase activity is inhibited by intracellular L-methionine (PubMed:18621668, PubMed:22095702, PubMed:25678706, PubMed:30352853). Binding of methionine to the dimerized C-terminal regulatory domain stabilizes an inward-facing, ATPase-inactive conformation of the transporter, and as a consequence, the rate of ATP hydrolysis decreases (PubMed:18621668, PubMed:22095702, PubMed:30352853). ADP is a competitive inhibitor (PubMed:25678706).</text>
</comment>
<comment type="biophysicochemical properties">
    <kinetics>
        <KM evidence="7">330 uM for ATP</KM>
        <KM evidence="7">325 uM for ATP (in the presence of 50 uM L-methionine)</KM>
        <KM evidence="7">1490 uM for ATP (in the presence of 120 uM ADP)</KM>
    </kinetics>
</comment>
<comment type="subunit">
    <text evidence="1 3 5 8">The complex is composed of two ATP-binding proteins (MetN), two transmembrane proteins (MetI) and a solute-binding protein (MetQ).</text>
</comment>
<comment type="interaction">
    <interactant intactId="EBI-541886">
        <id>P30750</id>
    </interactant>
    <interactant intactId="EBI-541977">
        <id>P16433</id>
        <label>hycG</label>
    </interactant>
    <organismsDiffer>false</organismsDiffer>
    <experiments>6</experiments>
</comment>
<comment type="interaction">
    <interactant intactId="EBI-541886">
        <id>P30750</id>
    </interactant>
    <interactant intactId="EBI-8769561">
        <id>P31547</id>
        <label>metI</label>
    </interactant>
    <organismsDiffer>false</organismsDiffer>
    <experiments>5</experiments>
</comment>
<comment type="interaction">
    <interactant intactId="EBI-541886">
        <id>P30750</id>
    </interactant>
    <interactant intactId="EBI-541895">
        <id>P0A9F1</id>
        <label>mntR</label>
    </interactant>
    <organismsDiffer>false</organismsDiffer>
    <experiments>4</experiments>
</comment>
<comment type="interaction">
    <interactant intactId="EBI-541886">
        <id>P30750</id>
    </interactant>
    <interactant intactId="EBI-542024">
        <id>P39353</id>
        <label>nanY</label>
    </interactant>
    <organismsDiffer>false</organismsDiffer>
    <experiments>3</experiments>
</comment>
<comment type="subcellular location">
    <subcellularLocation>
        <location evidence="1 10">Cell inner membrane</location>
        <topology evidence="1 10">Peripheral membrane protein</topology>
    </subcellularLocation>
</comment>
<comment type="induction">
    <text evidence="4">Repressed by MetJ.</text>
</comment>
<comment type="domain">
    <text evidence="5">Contains a regulatory C-terminal extension (C2) with a ferredoxin-like fold. The C2 domains from each MetN subunit in a transporter dimerize to form an eight-stranded beta sheet.</text>
</comment>
<comment type="similarity">
    <text evidence="1 10">Belongs to the ABC transporter superfamily. Methionine importer (TC 3.A.1.24) family.</text>
</comment>
<comment type="sequence caution" evidence="10">
    <conflict type="frameshift">
        <sequence resource="EMBL-CDS" id="AAC36869"/>
    </conflict>
</comment>
<comment type="sequence caution" evidence="10">
    <conflict type="frameshift">
        <sequence resource="EMBL-CDS" id="BAA03659"/>
    </conflict>
</comment>
<name>METN_ECOLI</name>